<comment type="function">
    <text evidence="3">Involved in regulation of xylonate catabolism. Represses the expression of both yagA and yagEF operons. Binds mainly at a single site within the spacer of the bidirectional transcription units yagA and yagEF.</text>
</comment>
<comment type="activity regulation">
    <text evidence="3">Activity may be controlled by xylonate.</text>
</comment>
<comment type="developmental stage">
    <text evidence="3">Expressed in the exponentially growing phase. Level decreases down to an undetectable level during stationary phase.</text>
</comment>
<gene>
    <name evidence="4" type="primary">xynR</name>
    <name type="synonym">yagI</name>
    <name type="ordered locus">b0272</name>
    <name type="ordered locus">JW0265</name>
</gene>
<reference key="1">
    <citation type="submission" date="1997-01" db="EMBL/GenBank/DDBJ databases">
        <title>Sequence of minutes 4-25 of Escherichia coli.</title>
        <authorList>
            <person name="Chung E."/>
            <person name="Allen E."/>
            <person name="Araujo R."/>
            <person name="Aparicio A.M."/>
            <person name="Davis K."/>
            <person name="Duncan M."/>
            <person name="Federspiel N."/>
            <person name="Hyman R."/>
            <person name="Kalman S."/>
            <person name="Komp C."/>
            <person name="Kurdi O."/>
            <person name="Lew H."/>
            <person name="Lin D."/>
            <person name="Namath A."/>
            <person name="Oefner P."/>
            <person name="Roberts D."/>
            <person name="Schramm S."/>
            <person name="Davis R.W."/>
        </authorList>
    </citation>
    <scope>NUCLEOTIDE SEQUENCE [LARGE SCALE GENOMIC DNA]</scope>
    <source>
        <strain>K12 / MG1655 / ATCC 47076</strain>
    </source>
</reference>
<reference key="2">
    <citation type="journal article" date="1997" name="Science">
        <title>The complete genome sequence of Escherichia coli K-12.</title>
        <authorList>
            <person name="Blattner F.R."/>
            <person name="Plunkett G. III"/>
            <person name="Bloch C.A."/>
            <person name="Perna N.T."/>
            <person name="Burland V."/>
            <person name="Riley M."/>
            <person name="Collado-Vides J."/>
            <person name="Glasner J.D."/>
            <person name="Rode C.K."/>
            <person name="Mayhew G.F."/>
            <person name="Gregor J."/>
            <person name="Davis N.W."/>
            <person name="Kirkpatrick H.A."/>
            <person name="Goeden M.A."/>
            <person name="Rose D.J."/>
            <person name="Mau B."/>
            <person name="Shao Y."/>
        </authorList>
    </citation>
    <scope>NUCLEOTIDE SEQUENCE [LARGE SCALE GENOMIC DNA]</scope>
    <source>
        <strain>K12 / MG1655 / ATCC 47076</strain>
    </source>
</reference>
<reference key="3">
    <citation type="journal article" date="2006" name="Mol. Syst. Biol.">
        <title>Highly accurate genome sequences of Escherichia coli K-12 strains MG1655 and W3110.</title>
        <authorList>
            <person name="Hayashi K."/>
            <person name="Morooka N."/>
            <person name="Yamamoto Y."/>
            <person name="Fujita K."/>
            <person name="Isono K."/>
            <person name="Choi S."/>
            <person name="Ohtsubo E."/>
            <person name="Baba T."/>
            <person name="Wanner B.L."/>
            <person name="Mori H."/>
            <person name="Horiuchi T."/>
        </authorList>
    </citation>
    <scope>NUCLEOTIDE SEQUENCE [LARGE SCALE GENOMIC DNA]</scope>
    <source>
        <strain>K12 / W3110 / ATCC 27325 / DSM 5911</strain>
    </source>
</reference>
<reference key="4">
    <citation type="journal article" date="2017" name="FEMS Microbiol. Lett.">
        <title>Regulatory role of XynR (YagI) in catabolism of xylonate in Escherichia coli K-12.</title>
        <authorList>
            <person name="Shimada T."/>
            <person name="Momiyama E."/>
            <person name="Yamanaka Y."/>
            <person name="Watanabe H."/>
            <person name="Yamamoto K."/>
            <person name="Ishihama A."/>
        </authorList>
    </citation>
    <scope>FUNCTION</scope>
    <scope>DNA-BINDING</scope>
    <scope>ACTIVITY REGULATION</scope>
    <scope>DEVELOPMENTAL STAGE</scope>
</reference>
<accession>P77300</accession>
<accession>Q2MCF0</accession>
<evidence type="ECO:0000255" key="1">
    <source>
        <dbReference type="PROSITE-ProRule" id="PRU00393"/>
    </source>
</evidence>
<evidence type="ECO:0000255" key="2">
    <source>
        <dbReference type="PROSITE-ProRule" id="PRU00394"/>
    </source>
</evidence>
<evidence type="ECO:0000269" key="3">
    <source>
    </source>
</evidence>
<evidence type="ECO:0000303" key="4">
    <source>
    </source>
</evidence>
<evidence type="ECO:0000305" key="5"/>
<keyword id="KW-0238">DNA-binding</keyword>
<keyword id="KW-1185">Reference proteome</keyword>
<keyword id="KW-0678">Repressor</keyword>
<keyword id="KW-0804">Transcription</keyword>
<keyword id="KW-0805">Transcription regulation</keyword>
<dbReference type="EMBL" id="U70214">
    <property type="protein sequence ID" value="AAB08693.1"/>
    <property type="molecule type" value="Genomic_DNA"/>
</dbReference>
<dbReference type="EMBL" id="U00096">
    <property type="protein sequence ID" value="AAC73375.1"/>
    <property type="molecule type" value="Genomic_DNA"/>
</dbReference>
<dbReference type="EMBL" id="AP009048">
    <property type="protein sequence ID" value="BAE76056.1"/>
    <property type="molecule type" value="Genomic_DNA"/>
</dbReference>
<dbReference type="PIR" id="H64752">
    <property type="entry name" value="H64752"/>
</dbReference>
<dbReference type="RefSeq" id="NP_414806.1">
    <property type="nucleotide sequence ID" value="NC_000913.3"/>
</dbReference>
<dbReference type="RefSeq" id="WP_001121657.1">
    <property type="nucleotide sequence ID" value="NZ_LN832404.1"/>
</dbReference>
<dbReference type="SMR" id="P77300"/>
<dbReference type="BioGRID" id="4261498">
    <property type="interactions" value="105"/>
</dbReference>
<dbReference type="FunCoup" id="P77300">
    <property type="interactions" value="30"/>
</dbReference>
<dbReference type="IntAct" id="P77300">
    <property type="interactions" value="5"/>
</dbReference>
<dbReference type="STRING" id="511145.b0272"/>
<dbReference type="jPOST" id="P77300"/>
<dbReference type="PaxDb" id="511145-b0272"/>
<dbReference type="EnsemblBacteria" id="AAC73375">
    <property type="protein sequence ID" value="AAC73375"/>
    <property type="gene ID" value="b0272"/>
</dbReference>
<dbReference type="GeneID" id="945016"/>
<dbReference type="KEGG" id="ecj:JW0265"/>
<dbReference type="KEGG" id="eco:b0272"/>
<dbReference type="KEGG" id="ecoc:C3026_01320"/>
<dbReference type="PATRIC" id="fig|1411691.4.peg.2008"/>
<dbReference type="EchoBASE" id="EB3133"/>
<dbReference type="eggNOG" id="COG1414">
    <property type="taxonomic scope" value="Bacteria"/>
</dbReference>
<dbReference type="HOGENOM" id="CLU_062618_7_1_6"/>
<dbReference type="InParanoid" id="P77300"/>
<dbReference type="OMA" id="PVRMTAM"/>
<dbReference type="OrthoDB" id="9807558at2"/>
<dbReference type="PhylomeDB" id="P77300"/>
<dbReference type="BioCyc" id="EcoCyc:G6144-MONOMER"/>
<dbReference type="PRO" id="PR:P77300"/>
<dbReference type="Proteomes" id="UP000000625">
    <property type="component" value="Chromosome"/>
</dbReference>
<dbReference type="GO" id="GO:0003677">
    <property type="term" value="F:DNA binding"/>
    <property type="evidence" value="ECO:0000318"/>
    <property type="project" value="GO_Central"/>
</dbReference>
<dbReference type="GO" id="GO:0003700">
    <property type="term" value="F:DNA-binding transcription factor activity"/>
    <property type="evidence" value="ECO:0000318"/>
    <property type="project" value="GO_Central"/>
</dbReference>
<dbReference type="GO" id="GO:0000976">
    <property type="term" value="F:transcription cis-regulatory region binding"/>
    <property type="evidence" value="ECO:0000314"/>
    <property type="project" value="EcoCyc"/>
</dbReference>
<dbReference type="GO" id="GO:0045892">
    <property type="term" value="P:negative regulation of DNA-templated transcription"/>
    <property type="evidence" value="ECO:0000314"/>
    <property type="project" value="EcoCyc"/>
</dbReference>
<dbReference type="GO" id="GO:0044010">
    <property type="term" value="P:single-species biofilm formation"/>
    <property type="evidence" value="ECO:0000315"/>
    <property type="project" value="EcoCyc"/>
</dbReference>
<dbReference type="FunFam" id="3.30.450.40:FF:000009">
    <property type="entry name" value="DNA-binding transcriptional regulator KdgR"/>
    <property type="match status" value="1"/>
</dbReference>
<dbReference type="FunFam" id="1.10.10.10:FF:000056">
    <property type="entry name" value="IclR family transcriptional regulator"/>
    <property type="match status" value="1"/>
</dbReference>
<dbReference type="Gene3D" id="3.30.450.40">
    <property type="match status" value="1"/>
</dbReference>
<dbReference type="Gene3D" id="1.10.10.10">
    <property type="entry name" value="Winged helix-like DNA-binding domain superfamily/Winged helix DNA-binding domain"/>
    <property type="match status" value="1"/>
</dbReference>
<dbReference type="InterPro" id="IPR029016">
    <property type="entry name" value="GAF-like_dom_sf"/>
</dbReference>
<dbReference type="InterPro" id="IPR050707">
    <property type="entry name" value="HTH_MetabolicPath_Reg"/>
</dbReference>
<dbReference type="InterPro" id="IPR014757">
    <property type="entry name" value="Tscrpt_reg_IclR_C"/>
</dbReference>
<dbReference type="InterPro" id="IPR005471">
    <property type="entry name" value="Tscrpt_reg_IclR_N"/>
</dbReference>
<dbReference type="InterPro" id="IPR036388">
    <property type="entry name" value="WH-like_DNA-bd_sf"/>
</dbReference>
<dbReference type="InterPro" id="IPR036390">
    <property type="entry name" value="WH_DNA-bd_sf"/>
</dbReference>
<dbReference type="PANTHER" id="PTHR30136">
    <property type="entry name" value="HELIX-TURN-HELIX TRANSCRIPTIONAL REGULATOR, ICLR FAMILY"/>
    <property type="match status" value="1"/>
</dbReference>
<dbReference type="PANTHER" id="PTHR30136:SF7">
    <property type="entry name" value="HTH-TYPE TRANSCRIPTIONAL REGULATOR KDGR-RELATED"/>
    <property type="match status" value="1"/>
</dbReference>
<dbReference type="Pfam" id="PF09339">
    <property type="entry name" value="HTH_IclR"/>
    <property type="match status" value="1"/>
</dbReference>
<dbReference type="Pfam" id="PF01614">
    <property type="entry name" value="IclR_C"/>
    <property type="match status" value="1"/>
</dbReference>
<dbReference type="SMART" id="SM00346">
    <property type="entry name" value="HTH_ICLR"/>
    <property type="match status" value="1"/>
</dbReference>
<dbReference type="SUPFAM" id="SSF55781">
    <property type="entry name" value="GAF domain-like"/>
    <property type="match status" value="1"/>
</dbReference>
<dbReference type="SUPFAM" id="SSF46785">
    <property type="entry name" value="Winged helix' DNA-binding domain"/>
    <property type="match status" value="1"/>
</dbReference>
<dbReference type="PROSITE" id="PS51077">
    <property type="entry name" value="HTH_ICLR"/>
    <property type="match status" value="1"/>
</dbReference>
<dbReference type="PROSITE" id="PS51078">
    <property type="entry name" value="ICLR_ED"/>
    <property type="match status" value="1"/>
</dbReference>
<proteinExistence type="evidence at protein level"/>
<organism>
    <name type="scientific">Escherichia coli (strain K12)</name>
    <dbReference type="NCBI Taxonomy" id="83333"/>
    <lineage>
        <taxon>Bacteria</taxon>
        <taxon>Pseudomonadati</taxon>
        <taxon>Pseudomonadota</taxon>
        <taxon>Gammaproteobacteria</taxon>
        <taxon>Enterobacterales</taxon>
        <taxon>Enterobacteriaceae</taxon>
        <taxon>Escherichia</taxon>
    </lineage>
</organism>
<name>XYNR_ECOLI</name>
<protein>
    <recommendedName>
        <fullName evidence="5">HTH-type transcriptional regulator XynR</fullName>
    </recommendedName>
    <alternativeName>
        <fullName evidence="4">Regulator of xylonate catabolism</fullName>
    </alternativeName>
</protein>
<sequence length="252" mass="27838">MPIIQSVERALQILDLFNEQATELKITDISKLMGLSKSTLHSLLKTLQLHGYIDQNPENGKYRLGMKLVERGHFVVGSIDIRQKAKGWLTELSRRTGQTTHLGILDGREGVYIEKIEGKLAAIAYSRIGRRLPVHATAIGKVLIAWLGEAELNALLEGYQYTTFTPATLASREALMSALAQTREQGYALDSEENEQGVRCVAVPVWNHESRVIAALSLSTLTSRVDDAELANFREQLQQAGLALSRALGYPA</sequence>
<feature type="chain" id="PRO_0000201769" description="HTH-type transcriptional regulator XynR">
    <location>
        <begin position="1"/>
        <end position="252"/>
    </location>
</feature>
<feature type="domain" description="HTH iclR-type" evidence="1">
    <location>
        <begin position="4"/>
        <end position="66"/>
    </location>
</feature>
<feature type="domain" description="IclR-ED" evidence="2">
    <location>
        <begin position="81"/>
        <end position="250"/>
    </location>
</feature>
<feature type="DNA-binding region" description="H-T-H motif" evidence="1">
    <location>
        <begin position="25"/>
        <end position="45"/>
    </location>
</feature>